<protein>
    <recommendedName>
        <fullName evidence="1">Ribonuclease PH</fullName>
        <shortName evidence="1">RNase PH</shortName>
        <ecNumber evidence="1">2.7.7.56</ecNumber>
    </recommendedName>
    <alternativeName>
        <fullName evidence="1">tRNA nucleotidyltransferase</fullName>
    </alternativeName>
</protein>
<reference key="1">
    <citation type="journal article" date="2007" name="Nat. Biotechnol.">
        <title>Complete genome sequence of the erythromycin-producing bacterium Saccharopolyspora erythraea NRRL23338.</title>
        <authorList>
            <person name="Oliynyk M."/>
            <person name="Samborskyy M."/>
            <person name="Lester J.B."/>
            <person name="Mironenko T."/>
            <person name="Scott N."/>
            <person name="Dickens S."/>
            <person name="Haydock S.F."/>
            <person name="Leadlay P.F."/>
        </authorList>
    </citation>
    <scope>NUCLEOTIDE SEQUENCE [LARGE SCALE GENOMIC DNA]</scope>
    <source>
        <strain>ATCC 11635 / DSM 40517 / JCM 4748 / NBRC 13426 / NCIMB 8594 / NRRL 2338</strain>
    </source>
</reference>
<dbReference type="EC" id="2.7.7.56" evidence="1"/>
<dbReference type="EMBL" id="AM420293">
    <property type="protein sequence ID" value="CAM00538.1"/>
    <property type="molecule type" value="Genomic_DNA"/>
</dbReference>
<dbReference type="RefSeq" id="WP_011873289.1">
    <property type="nucleotide sequence ID" value="NC_009142.1"/>
</dbReference>
<dbReference type="SMR" id="A4F913"/>
<dbReference type="STRING" id="405948.SACE_1212"/>
<dbReference type="KEGG" id="sen:SACE_1212"/>
<dbReference type="eggNOG" id="COG0689">
    <property type="taxonomic scope" value="Bacteria"/>
</dbReference>
<dbReference type="HOGENOM" id="CLU_050858_0_0_11"/>
<dbReference type="OrthoDB" id="9802265at2"/>
<dbReference type="Proteomes" id="UP000006728">
    <property type="component" value="Chromosome"/>
</dbReference>
<dbReference type="GO" id="GO:0000175">
    <property type="term" value="F:3'-5'-RNA exonuclease activity"/>
    <property type="evidence" value="ECO:0007669"/>
    <property type="project" value="UniProtKB-UniRule"/>
</dbReference>
<dbReference type="GO" id="GO:0000049">
    <property type="term" value="F:tRNA binding"/>
    <property type="evidence" value="ECO:0007669"/>
    <property type="project" value="UniProtKB-UniRule"/>
</dbReference>
<dbReference type="GO" id="GO:0009022">
    <property type="term" value="F:tRNA nucleotidyltransferase activity"/>
    <property type="evidence" value="ECO:0007669"/>
    <property type="project" value="UniProtKB-UniRule"/>
</dbReference>
<dbReference type="GO" id="GO:0016075">
    <property type="term" value="P:rRNA catabolic process"/>
    <property type="evidence" value="ECO:0007669"/>
    <property type="project" value="UniProtKB-UniRule"/>
</dbReference>
<dbReference type="GO" id="GO:0006364">
    <property type="term" value="P:rRNA processing"/>
    <property type="evidence" value="ECO:0007669"/>
    <property type="project" value="UniProtKB-KW"/>
</dbReference>
<dbReference type="GO" id="GO:0008033">
    <property type="term" value="P:tRNA processing"/>
    <property type="evidence" value="ECO:0007669"/>
    <property type="project" value="UniProtKB-UniRule"/>
</dbReference>
<dbReference type="CDD" id="cd11362">
    <property type="entry name" value="RNase_PH_bact"/>
    <property type="match status" value="1"/>
</dbReference>
<dbReference type="FunFam" id="3.30.230.70:FF:000003">
    <property type="entry name" value="Ribonuclease PH"/>
    <property type="match status" value="1"/>
</dbReference>
<dbReference type="Gene3D" id="3.30.230.70">
    <property type="entry name" value="GHMP Kinase, N-terminal domain"/>
    <property type="match status" value="1"/>
</dbReference>
<dbReference type="HAMAP" id="MF_00564">
    <property type="entry name" value="RNase_PH"/>
    <property type="match status" value="1"/>
</dbReference>
<dbReference type="InterPro" id="IPR001247">
    <property type="entry name" value="ExoRNase_PH_dom1"/>
</dbReference>
<dbReference type="InterPro" id="IPR015847">
    <property type="entry name" value="ExoRNase_PH_dom2"/>
</dbReference>
<dbReference type="InterPro" id="IPR036345">
    <property type="entry name" value="ExoRNase_PH_dom2_sf"/>
</dbReference>
<dbReference type="InterPro" id="IPR027408">
    <property type="entry name" value="PNPase/RNase_PH_dom_sf"/>
</dbReference>
<dbReference type="InterPro" id="IPR020568">
    <property type="entry name" value="Ribosomal_Su5_D2-typ_SF"/>
</dbReference>
<dbReference type="InterPro" id="IPR050080">
    <property type="entry name" value="RNase_PH"/>
</dbReference>
<dbReference type="InterPro" id="IPR002381">
    <property type="entry name" value="RNase_PH_bac-type"/>
</dbReference>
<dbReference type="InterPro" id="IPR018336">
    <property type="entry name" value="RNase_PH_CS"/>
</dbReference>
<dbReference type="NCBIfam" id="TIGR01966">
    <property type="entry name" value="RNasePH"/>
    <property type="match status" value="1"/>
</dbReference>
<dbReference type="PANTHER" id="PTHR11953">
    <property type="entry name" value="EXOSOME COMPLEX COMPONENT"/>
    <property type="match status" value="1"/>
</dbReference>
<dbReference type="PANTHER" id="PTHR11953:SF0">
    <property type="entry name" value="EXOSOME COMPLEX COMPONENT RRP41"/>
    <property type="match status" value="1"/>
</dbReference>
<dbReference type="Pfam" id="PF01138">
    <property type="entry name" value="RNase_PH"/>
    <property type="match status" value="1"/>
</dbReference>
<dbReference type="Pfam" id="PF03725">
    <property type="entry name" value="RNase_PH_C"/>
    <property type="match status" value="1"/>
</dbReference>
<dbReference type="SUPFAM" id="SSF55666">
    <property type="entry name" value="Ribonuclease PH domain 2-like"/>
    <property type="match status" value="1"/>
</dbReference>
<dbReference type="SUPFAM" id="SSF54211">
    <property type="entry name" value="Ribosomal protein S5 domain 2-like"/>
    <property type="match status" value="1"/>
</dbReference>
<dbReference type="PROSITE" id="PS01277">
    <property type="entry name" value="RIBONUCLEASE_PH"/>
    <property type="match status" value="1"/>
</dbReference>
<keyword id="KW-0548">Nucleotidyltransferase</keyword>
<keyword id="KW-1185">Reference proteome</keyword>
<keyword id="KW-0694">RNA-binding</keyword>
<keyword id="KW-0698">rRNA processing</keyword>
<keyword id="KW-0808">Transferase</keyword>
<keyword id="KW-0819">tRNA processing</keyword>
<keyword id="KW-0820">tRNA-binding</keyword>
<evidence type="ECO:0000255" key="1">
    <source>
        <dbReference type="HAMAP-Rule" id="MF_00564"/>
    </source>
</evidence>
<gene>
    <name evidence="1" type="primary">rph</name>
    <name type="ordered locus">SACE_1212</name>
</gene>
<comment type="function">
    <text evidence="1">Phosphorolytic 3'-5' exoribonuclease that plays an important role in tRNA 3'-end maturation. Removes nucleotide residues following the 3'-CCA terminus of tRNAs; can also add nucleotides to the ends of RNA molecules by using nucleoside diphosphates as substrates, but this may not be physiologically important. Probably plays a role in initiation of 16S rRNA degradation (leading to ribosome degradation) during starvation.</text>
</comment>
<comment type="catalytic activity">
    <reaction evidence="1">
        <text>tRNA(n+1) + phosphate = tRNA(n) + a ribonucleoside 5'-diphosphate</text>
        <dbReference type="Rhea" id="RHEA:10628"/>
        <dbReference type="Rhea" id="RHEA-COMP:17343"/>
        <dbReference type="Rhea" id="RHEA-COMP:17344"/>
        <dbReference type="ChEBI" id="CHEBI:43474"/>
        <dbReference type="ChEBI" id="CHEBI:57930"/>
        <dbReference type="ChEBI" id="CHEBI:173114"/>
        <dbReference type="EC" id="2.7.7.56"/>
    </reaction>
</comment>
<comment type="subunit">
    <text evidence="1">Homohexameric ring arranged as a trimer of dimers.</text>
</comment>
<comment type="similarity">
    <text evidence="1">Belongs to the RNase PH family.</text>
</comment>
<feature type="chain" id="PRO_1000024875" description="Ribonuclease PH">
    <location>
        <begin position="1"/>
        <end position="251"/>
    </location>
</feature>
<feature type="binding site" evidence="1">
    <location>
        <position position="87"/>
    </location>
    <ligand>
        <name>phosphate</name>
        <dbReference type="ChEBI" id="CHEBI:43474"/>
        <note>substrate</note>
    </ligand>
</feature>
<feature type="binding site" evidence="1">
    <location>
        <begin position="125"/>
        <end position="127"/>
    </location>
    <ligand>
        <name>phosphate</name>
        <dbReference type="ChEBI" id="CHEBI:43474"/>
        <note>substrate</note>
    </ligand>
</feature>
<organism>
    <name type="scientific">Saccharopolyspora erythraea (strain ATCC 11635 / DSM 40517 / JCM 4748 / NBRC 13426 / NCIMB 8594 / NRRL 2338)</name>
    <dbReference type="NCBI Taxonomy" id="405948"/>
    <lineage>
        <taxon>Bacteria</taxon>
        <taxon>Bacillati</taxon>
        <taxon>Actinomycetota</taxon>
        <taxon>Actinomycetes</taxon>
        <taxon>Pseudonocardiales</taxon>
        <taxon>Pseudonocardiaceae</taxon>
        <taxon>Saccharopolyspora</taxon>
    </lineage>
</organism>
<proteinExistence type="inferred from homology"/>
<accession>A4F913</accession>
<name>RNPH_SACEN</name>
<sequence>MARADGRSDDALREVRITRGYQDWPAGSVLVEFGRTRVLCAASVQEGVPRWRAGSGLGWVTAEYAMLPSSTNTRSARESVKGRIGGRTHEISRLVGRSLRACIDLAALGENTIALDCDVIQADGGTRTAAITGAYVALADAITWLSAAGRLTDPKPLSCSIAAVSVGVVDGRVRLDLPYEEDSRAEVDMNVVATDHGTLVEVQGTGEGATFTRSTMDKMIDFALAGCSELSRIQSEALAAPYPGELPGGAA</sequence>